<name>G6PI_SALDC</name>
<comment type="function">
    <text evidence="1">Catalyzes the reversible isomerization of glucose-6-phosphate to fructose-6-phosphate.</text>
</comment>
<comment type="catalytic activity">
    <reaction evidence="1">
        <text>alpha-D-glucose 6-phosphate = beta-D-fructose 6-phosphate</text>
        <dbReference type="Rhea" id="RHEA:11816"/>
        <dbReference type="ChEBI" id="CHEBI:57634"/>
        <dbReference type="ChEBI" id="CHEBI:58225"/>
        <dbReference type="EC" id="5.3.1.9"/>
    </reaction>
</comment>
<comment type="pathway">
    <text evidence="1">Carbohydrate biosynthesis; gluconeogenesis.</text>
</comment>
<comment type="pathway">
    <text evidence="1">Carbohydrate degradation; glycolysis; D-glyceraldehyde 3-phosphate and glycerone phosphate from D-glucose: step 2/4.</text>
</comment>
<comment type="subcellular location">
    <subcellularLocation>
        <location evidence="1">Cytoplasm</location>
    </subcellularLocation>
</comment>
<comment type="similarity">
    <text evidence="1">Belongs to the GPI family.</text>
</comment>
<accession>B5FQP5</accession>
<dbReference type="EC" id="5.3.1.9" evidence="1"/>
<dbReference type="EMBL" id="CP001144">
    <property type="protein sequence ID" value="ACH73971.1"/>
    <property type="molecule type" value="Genomic_DNA"/>
</dbReference>
<dbReference type="RefSeq" id="WP_000790037.1">
    <property type="nucleotide sequence ID" value="NC_011205.1"/>
</dbReference>
<dbReference type="SMR" id="B5FQP5"/>
<dbReference type="KEGG" id="sed:SeD_A4615"/>
<dbReference type="HOGENOM" id="CLU_017947_3_1_6"/>
<dbReference type="UniPathway" id="UPA00109">
    <property type="reaction ID" value="UER00181"/>
</dbReference>
<dbReference type="UniPathway" id="UPA00138"/>
<dbReference type="Proteomes" id="UP000008322">
    <property type="component" value="Chromosome"/>
</dbReference>
<dbReference type="GO" id="GO:0005829">
    <property type="term" value="C:cytosol"/>
    <property type="evidence" value="ECO:0007669"/>
    <property type="project" value="TreeGrafter"/>
</dbReference>
<dbReference type="GO" id="GO:0097367">
    <property type="term" value="F:carbohydrate derivative binding"/>
    <property type="evidence" value="ECO:0007669"/>
    <property type="project" value="InterPro"/>
</dbReference>
<dbReference type="GO" id="GO:0004347">
    <property type="term" value="F:glucose-6-phosphate isomerase activity"/>
    <property type="evidence" value="ECO:0007669"/>
    <property type="project" value="UniProtKB-UniRule"/>
</dbReference>
<dbReference type="GO" id="GO:0048029">
    <property type="term" value="F:monosaccharide binding"/>
    <property type="evidence" value="ECO:0007669"/>
    <property type="project" value="TreeGrafter"/>
</dbReference>
<dbReference type="GO" id="GO:0006094">
    <property type="term" value="P:gluconeogenesis"/>
    <property type="evidence" value="ECO:0007669"/>
    <property type="project" value="UniProtKB-UniRule"/>
</dbReference>
<dbReference type="GO" id="GO:0051156">
    <property type="term" value="P:glucose 6-phosphate metabolic process"/>
    <property type="evidence" value="ECO:0007669"/>
    <property type="project" value="TreeGrafter"/>
</dbReference>
<dbReference type="GO" id="GO:0006096">
    <property type="term" value="P:glycolytic process"/>
    <property type="evidence" value="ECO:0007669"/>
    <property type="project" value="UniProtKB-UniRule"/>
</dbReference>
<dbReference type="CDD" id="cd05015">
    <property type="entry name" value="SIS_PGI_1"/>
    <property type="match status" value="1"/>
</dbReference>
<dbReference type="CDD" id="cd05016">
    <property type="entry name" value="SIS_PGI_2"/>
    <property type="match status" value="1"/>
</dbReference>
<dbReference type="FunFam" id="1.10.1390.10:FF:000001">
    <property type="entry name" value="Glucose-6-phosphate isomerase"/>
    <property type="match status" value="1"/>
</dbReference>
<dbReference type="FunFam" id="3.40.50.10490:FF:000004">
    <property type="entry name" value="Glucose-6-phosphate isomerase"/>
    <property type="match status" value="1"/>
</dbReference>
<dbReference type="Gene3D" id="1.10.1390.10">
    <property type="match status" value="1"/>
</dbReference>
<dbReference type="Gene3D" id="3.40.50.10490">
    <property type="entry name" value="Glucose-6-phosphate isomerase like protein, domain 1"/>
    <property type="match status" value="2"/>
</dbReference>
<dbReference type="HAMAP" id="MF_00473">
    <property type="entry name" value="G6P_isomerase"/>
    <property type="match status" value="1"/>
</dbReference>
<dbReference type="InterPro" id="IPR001672">
    <property type="entry name" value="G6P_Isomerase"/>
</dbReference>
<dbReference type="InterPro" id="IPR023096">
    <property type="entry name" value="G6P_Isomerase_C"/>
</dbReference>
<dbReference type="InterPro" id="IPR018189">
    <property type="entry name" value="Phosphoglucose_isomerase_CS"/>
</dbReference>
<dbReference type="InterPro" id="IPR046348">
    <property type="entry name" value="SIS_dom_sf"/>
</dbReference>
<dbReference type="InterPro" id="IPR035476">
    <property type="entry name" value="SIS_PGI_1"/>
</dbReference>
<dbReference type="InterPro" id="IPR035482">
    <property type="entry name" value="SIS_PGI_2"/>
</dbReference>
<dbReference type="NCBIfam" id="NF001211">
    <property type="entry name" value="PRK00179.1"/>
    <property type="match status" value="1"/>
</dbReference>
<dbReference type="PANTHER" id="PTHR11469">
    <property type="entry name" value="GLUCOSE-6-PHOSPHATE ISOMERASE"/>
    <property type="match status" value="1"/>
</dbReference>
<dbReference type="PANTHER" id="PTHR11469:SF1">
    <property type="entry name" value="GLUCOSE-6-PHOSPHATE ISOMERASE"/>
    <property type="match status" value="1"/>
</dbReference>
<dbReference type="Pfam" id="PF00342">
    <property type="entry name" value="PGI"/>
    <property type="match status" value="1"/>
</dbReference>
<dbReference type="PRINTS" id="PR00662">
    <property type="entry name" value="G6PISOMERASE"/>
</dbReference>
<dbReference type="SUPFAM" id="SSF53697">
    <property type="entry name" value="SIS domain"/>
    <property type="match status" value="1"/>
</dbReference>
<dbReference type="PROSITE" id="PS00765">
    <property type="entry name" value="P_GLUCOSE_ISOMERASE_1"/>
    <property type="match status" value="1"/>
</dbReference>
<dbReference type="PROSITE" id="PS00174">
    <property type="entry name" value="P_GLUCOSE_ISOMERASE_2"/>
    <property type="match status" value="1"/>
</dbReference>
<dbReference type="PROSITE" id="PS51463">
    <property type="entry name" value="P_GLUCOSE_ISOMERASE_3"/>
    <property type="match status" value="1"/>
</dbReference>
<gene>
    <name evidence="1" type="primary">pgi</name>
    <name type="ordered locus">SeD_A4615</name>
</gene>
<organism>
    <name type="scientific">Salmonella dublin (strain CT_02021853)</name>
    <dbReference type="NCBI Taxonomy" id="439851"/>
    <lineage>
        <taxon>Bacteria</taxon>
        <taxon>Pseudomonadati</taxon>
        <taxon>Pseudomonadota</taxon>
        <taxon>Gammaproteobacteria</taxon>
        <taxon>Enterobacterales</taxon>
        <taxon>Enterobacteriaceae</taxon>
        <taxon>Salmonella</taxon>
    </lineage>
</organism>
<sequence length="549" mass="61429">MKNINPTQTSAWQALQKHYDEMKDVTIAELFANDSDRFAKFSATFDDLMLVDFSKNRITEETLAKLQDLAKETDLAGAIKSMFSGEKINRTEDRAVLHVALRNRSNTPIIVDGKDVMPEVNAVLEKMKTFSQAIISGQWKGYTGKAITDVVNIGIGGSDLGPFMVTEALRPYKNHLTMHFVSNVDGTHIAEVLKKVNPETTLFLVASKTFTTQETMTNAHSARDWFLKTAGDEKHVAKHFAALSTNAKAVGEFGIDTANMFEFWDWVGGRYSLWSAIGLSIILSVGFDNFVELLSGAHAMDKHFSTTPAEKNLPILLALIGIWYNNFFGAETEAILPYDQYMHRFAAYFQQGNMESNGKYVDRNGNAVDYQTGPIIWGEPGTNGQHAFYQLIHQGTKMVPCDFIAPAITHNPLSDHHQKLLSNFFAQTEALAFGKSREVVEQEYRDQGKDPAQLEHVVPFKVFEGNRPTNSILLREITPFSLGALIALYEHKIFTQGVILNIFTFDQWGVELGKQLANRILPELGDDKAISSHDSSTNGLINRYKAWRA</sequence>
<protein>
    <recommendedName>
        <fullName evidence="1">Glucose-6-phosphate isomerase</fullName>
        <shortName evidence="1">GPI</shortName>
        <ecNumber evidence="1">5.3.1.9</ecNumber>
    </recommendedName>
    <alternativeName>
        <fullName evidence="1">Phosphoglucose isomerase</fullName>
        <shortName evidence="1">PGI</shortName>
    </alternativeName>
    <alternativeName>
        <fullName evidence="1">Phosphohexose isomerase</fullName>
        <shortName evidence="1">PHI</shortName>
    </alternativeName>
</protein>
<proteinExistence type="inferred from homology"/>
<reference key="1">
    <citation type="journal article" date="2011" name="J. Bacteriol.">
        <title>Comparative genomics of 28 Salmonella enterica isolates: evidence for CRISPR-mediated adaptive sublineage evolution.</title>
        <authorList>
            <person name="Fricke W.F."/>
            <person name="Mammel M.K."/>
            <person name="McDermott P.F."/>
            <person name="Tartera C."/>
            <person name="White D.G."/>
            <person name="Leclerc J.E."/>
            <person name="Ravel J."/>
            <person name="Cebula T.A."/>
        </authorList>
    </citation>
    <scope>NUCLEOTIDE SEQUENCE [LARGE SCALE GENOMIC DNA]</scope>
    <source>
        <strain>CT_02021853</strain>
    </source>
</reference>
<feature type="chain" id="PRO_1000125751" description="Glucose-6-phosphate isomerase">
    <location>
        <begin position="1"/>
        <end position="549"/>
    </location>
</feature>
<feature type="active site" description="Proton donor" evidence="1">
    <location>
        <position position="355"/>
    </location>
</feature>
<feature type="active site" evidence="1">
    <location>
        <position position="386"/>
    </location>
</feature>
<feature type="active site" evidence="1">
    <location>
        <position position="514"/>
    </location>
</feature>
<evidence type="ECO:0000255" key="1">
    <source>
        <dbReference type="HAMAP-Rule" id="MF_00473"/>
    </source>
</evidence>
<keyword id="KW-0963">Cytoplasm</keyword>
<keyword id="KW-0312">Gluconeogenesis</keyword>
<keyword id="KW-0324">Glycolysis</keyword>
<keyword id="KW-0413">Isomerase</keyword>